<name>LIPA_RICTY</name>
<accession>Q68W08</accession>
<protein>
    <recommendedName>
        <fullName evidence="1">Lipoyl synthase</fullName>
        <ecNumber evidence="1">2.8.1.8</ecNumber>
    </recommendedName>
    <alternativeName>
        <fullName evidence="1">Lip-syn</fullName>
        <shortName evidence="1">LS</shortName>
    </alternativeName>
    <alternativeName>
        <fullName evidence="1">Lipoate synthase</fullName>
    </alternativeName>
    <alternativeName>
        <fullName evidence="1">Lipoic acid synthase</fullName>
    </alternativeName>
    <alternativeName>
        <fullName evidence="1">Sulfur insertion protein LipA</fullName>
    </alternativeName>
</protein>
<proteinExistence type="inferred from homology"/>
<sequence length="297" mass="33658">MTNVNRRPDWIKVKAPNSAEYYNTKDLIKNLRLNTVCEEAACPNIGECWSRKHATVMILGSVCTRACRFCNVKTGRPDLLDPHEPRRLAEAVQKLNLNHVVITSVDRDDLEDGGASHFAECINEIRRSSPNTTIEILTPDFLRKAGAVEVIANSKPDVFNHNVETVPSLYKTIRPGARYYNSLSLLHNIKKLSPEIFTKSGMMVGLGEEINEVVQVMDDLREANVDFLTIGQYLQPTKSHAEVIKYVTPEEFKYLERIAKTKGFLMVSATPLTRSSYHADKDFQKLKENYNIRLASM</sequence>
<gene>
    <name evidence="1" type="primary">lipA</name>
    <name type="ordered locus">RT0727</name>
</gene>
<feature type="chain" id="PRO_0000278009" description="Lipoyl synthase">
    <location>
        <begin position="1"/>
        <end position="297"/>
    </location>
</feature>
<feature type="domain" description="Radical SAM core" evidence="2">
    <location>
        <begin position="49"/>
        <end position="265"/>
    </location>
</feature>
<feature type="binding site" evidence="1">
    <location>
        <position position="37"/>
    </location>
    <ligand>
        <name>[4Fe-4S] cluster</name>
        <dbReference type="ChEBI" id="CHEBI:49883"/>
        <label>1</label>
    </ligand>
</feature>
<feature type="binding site" evidence="1">
    <location>
        <position position="42"/>
    </location>
    <ligand>
        <name>[4Fe-4S] cluster</name>
        <dbReference type="ChEBI" id="CHEBI:49883"/>
        <label>1</label>
    </ligand>
</feature>
<feature type="binding site" evidence="1">
    <location>
        <position position="48"/>
    </location>
    <ligand>
        <name>[4Fe-4S] cluster</name>
        <dbReference type="ChEBI" id="CHEBI:49883"/>
        <label>1</label>
    </ligand>
</feature>
<feature type="binding site" evidence="1">
    <location>
        <position position="63"/>
    </location>
    <ligand>
        <name>[4Fe-4S] cluster</name>
        <dbReference type="ChEBI" id="CHEBI:49883"/>
        <label>2</label>
        <note>4Fe-4S-S-AdoMet</note>
    </ligand>
</feature>
<feature type="binding site" evidence="1">
    <location>
        <position position="67"/>
    </location>
    <ligand>
        <name>[4Fe-4S] cluster</name>
        <dbReference type="ChEBI" id="CHEBI:49883"/>
        <label>2</label>
        <note>4Fe-4S-S-AdoMet</note>
    </ligand>
</feature>
<feature type="binding site" evidence="1">
    <location>
        <position position="70"/>
    </location>
    <ligand>
        <name>[4Fe-4S] cluster</name>
        <dbReference type="ChEBI" id="CHEBI:49883"/>
        <label>2</label>
        <note>4Fe-4S-S-AdoMet</note>
    </ligand>
</feature>
<feature type="binding site" evidence="1">
    <location>
        <position position="276"/>
    </location>
    <ligand>
        <name>[4Fe-4S] cluster</name>
        <dbReference type="ChEBI" id="CHEBI:49883"/>
        <label>1</label>
    </ligand>
</feature>
<comment type="function">
    <text evidence="1">Catalyzes the radical-mediated insertion of two sulfur atoms into the C-6 and C-8 positions of the octanoyl moiety bound to the lipoyl domains of lipoate-dependent enzymes, thereby converting the octanoylated domains into lipoylated derivatives.</text>
</comment>
<comment type="catalytic activity">
    <reaction evidence="1">
        <text>[[Fe-S] cluster scaffold protein carrying a second [4Fe-4S](2+) cluster] + N(6)-octanoyl-L-lysyl-[protein] + 2 oxidized [2Fe-2S]-[ferredoxin] + 2 S-adenosyl-L-methionine + 4 H(+) = [[Fe-S] cluster scaffold protein] + N(6)-[(R)-dihydrolipoyl]-L-lysyl-[protein] + 4 Fe(3+) + 2 hydrogen sulfide + 2 5'-deoxyadenosine + 2 L-methionine + 2 reduced [2Fe-2S]-[ferredoxin]</text>
        <dbReference type="Rhea" id="RHEA:16585"/>
        <dbReference type="Rhea" id="RHEA-COMP:9928"/>
        <dbReference type="Rhea" id="RHEA-COMP:10000"/>
        <dbReference type="Rhea" id="RHEA-COMP:10001"/>
        <dbReference type="Rhea" id="RHEA-COMP:10475"/>
        <dbReference type="Rhea" id="RHEA-COMP:14568"/>
        <dbReference type="Rhea" id="RHEA-COMP:14569"/>
        <dbReference type="ChEBI" id="CHEBI:15378"/>
        <dbReference type="ChEBI" id="CHEBI:17319"/>
        <dbReference type="ChEBI" id="CHEBI:29034"/>
        <dbReference type="ChEBI" id="CHEBI:29919"/>
        <dbReference type="ChEBI" id="CHEBI:33722"/>
        <dbReference type="ChEBI" id="CHEBI:33737"/>
        <dbReference type="ChEBI" id="CHEBI:33738"/>
        <dbReference type="ChEBI" id="CHEBI:57844"/>
        <dbReference type="ChEBI" id="CHEBI:59789"/>
        <dbReference type="ChEBI" id="CHEBI:78809"/>
        <dbReference type="ChEBI" id="CHEBI:83100"/>
        <dbReference type="EC" id="2.8.1.8"/>
    </reaction>
</comment>
<comment type="cofactor">
    <cofactor evidence="1">
        <name>[4Fe-4S] cluster</name>
        <dbReference type="ChEBI" id="CHEBI:49883"/>
    </cofactor>
    <text evidence="1">Binds 2 [4Fe-4S] clusters per subunit. One cluster is coordinated with 3 cysteines and an exchangeable S-adenosyl-L-methionine.</text>
</comment>
<comment type="pathway">
    <text evidence="1">Protein modification; protein lipoylation via endogenous pathway; protein N(6)-(lipoyl)lysine from octanoyl-[acyl-carrier-protein]: step 2/2.</text>
</comment>
<comment type="subcellular location">
    <subcellularLocation>
        <location evidence="1">Cytoplasm</location>
    </subcellularLocation>
</comment>
<comment type="similarity">
    <text evidence="1">Belongs to the radical SAM superfamily. Lipoyl synthase family.</text>
</comment>
<dbReference type="EC" id="2.8.1.8" evidence="1"/>
<dbReference type="EMBL" id="AE017197">
    <property type="protein sequence ID" value="AAU04184.1"/>
    <property type="molecule type" value="Genomic_DNA"/>
</dbReference>
<dbReference type="RefSeq" id="WP_011191160.1">
    <property type="nucleotide sequence ID" value="NC_006142.1"/>
</dbReference>
<dbReference type="SMR" id="Q68W08"/>
<dbReference type="KEGG" id="rty:RT0727"/>
<dbReference type="eggNOG" id="COG0320">
    <property type="taxonomic scope" value="Bacteria"/>
</dbReference>
<dbReference type="HOGENOM" id="CLU_033144_2_1_5"/>
<dbReference type="OrthoDB" id="9787898at2"/>
<dbReference type="UniPathway" id="UPA00538">
    <property type="reaction ID" value="UER00593"/>
</dbReference>
<dbReference type="Proteomes" id="UP000000604">
    <property type="component" value="Chromosome"/>
</dbReference>
<dbReference type="GO" id="GO:0005737">
    <property type="term" value="C:cytoplasm"/>
    <property type="evidence" value="ECO:0007669"/>
    <property type="project" value="UniProtKB-SubCell"/>
</dbReference>
<dbReference type="GO" id="GO:0051539">
    <property type="term" value="F:4 iron, 4 sulfur cluster binding"/>
    <property type="evidence" value="ECO:0007669"/>
    <property type="project" value="UniProtKB-UniRule"/>
</dbReference>
<dbReference type="GO" id="GO:0016992">
    <property type="term" value="F:lipoate synthase activity"/>
    <property type="evidence" value="ECO:0007669"/>
    <property type="project" value="UniProtKB-UniRule"/>
</dbReference>
<dbReference type="GO" id="GO:0046872">
    <property type="term" value="F:metal ion binding"/>
    <property type="evidence" value="ECO:0007669"/>
    <property type="project" value="UniProtKB-KW"/>
</dbReference>
<dbReference type="CDD" id="cd01335">
    <property type="entry name" value="Radical_SAM"/>
    <property type="match status" value="1"/>
</dbReference>
<dbReference type="FunFam" id="3.20.20.70:FF:000040">
    <property type="entry name" value="Lipoyl synthase"/>
    <property type="match status" value="1"/>
</dbReference>
<dbReference type="Gene3D" id="3.20.20.70">
    <property type="entry name" value="Aldolase class I"/>
    <property type="match status" value="1"/>
</dbReference>
<dbReference type="HAMAP" id="MF_00206">
    <property type="entry name" value="Lipoyl_synth"/>
    <property type="match status" value="1"/>
</dbReference>
<dbReference type="InterPro" id="IPR013785">
    <property type="entry name" value="Aldolase_TIM"/>
</dbReference>
<dbReference type="InterPro" id="IPR006638">
    <property type="entry name" value="Elp3/MiaA/NifB-like_rSAM"/>
</dbReference>
<dbReference type="InterPro" id="IPR031691">
    <property type="entry name" value="LIAS_N"/>
</dbReference>
<dbReference type="InterPro" id="IPR003698">
    <property type="entry name" value="Lipoyl_synth"/>
</dbReference>
<dbReference type="InterPro" id="IPR007197">
    <property type="entry name" value="rSAM"/>
</dbReference>
<dbReference type="NCBIfam" id="TIGR00510">
    <property type="entry name" value="lipA"/>
    <property type="match status" value="1"/>
</dbReference>
<dbReference type="NCBIfam" id="NF004019">
    <property type="entry name" value="PRK05481.1"/>
    <property type="match status" value="1"/>
</dbReference>
<dbReference type="NCBIfam" id="NF009544">
    <property type="entry name" value="PRK12928.1"/>
    <property type="match status" value="1"/>
</dbReference>
<dbReference type="PANTHER" id="PTHR10949">
    <property type="entry name" value="LIPOYL SYNTHASE"/>
    <property type="match status" value="1"/>
</dbReference>
<dbReference type="PANTHER" id="PTHR10949:SF0">
    <property type="entry name" value="LIPOYL SYNTHASE, MITOCHONDRIAL"/>
    <property type="match status" value="1"/>
</dbReference>
<dbReference type="Pfam" id="PF16881">
    <property type="entry name" value="LIAS_N"/>
    <property type="match status" value="1"/>
</dbReference>
<dbReference type="Pfam" id="PF04055">
    <property type="entry name" value="Radical_SAM"/>
    <property type="match status" value="1"/>
</dbReference>
<dbReference type="PIRSF" id="PIRSF005963">
    <property type="entry name" value="Lipoyl_synth"/>
    <property type="match status" value="1"/>
</dbReference>
<dbReference type="SFLD" id="SFLDF00271">
    <property type="entry name" value="lipoyl_synthase"/>
    <property type="match status" value="1"/>
</dbReference>
<dbReference type="SFLD" id="SFLDG01058">
    <property type="entry name" value="lipoyl_synthase_like"/>
    <property type="match status" value="1"/>
</dbReference>
<dbReference type="SMART" id="SM00729">
    <property type="entry name" value="Elp3"/>
    <property type="match status" value="1"/>
</dbReference>
<dbReference type="SUPFAM" id="SSF102114">
    <property type="entry name" value="Radical SAM enzymes"/>
    <property type="match status" value="1"/>
</dbReference>
<dbReference type="PROSITE" id="PS51918">
    <property type="entry name" value="RADICAL_SAM"/>
    <property type="match status" value="1"/>
</dbReference>
<keyword id="KW-0004">4Fe-4S</keyword>
<keyword id="KW-0963">Cytoplasm</keyword>
<keyword id="KW-0408">Iron</keyword>
<keyword id="KW-0411">Iron-sulfur</keyword>
<keyword id="KW-0479">Metal-binding</keyword>
<keyword id="KW-0949">S-adenosyl-L-methionine</keyword>
<keyword id="KW-0808">Transferase</keyword>
<evidence type="ECO:0000255" key="1">
    <source>
        <dbReference type="HAMAP-Rule" id="MF_00206"/>
    </source>
</evidence>
<evidence type="ECO:0000255" key="2">
    <source>
        <dbReference type="PROSITE-ProRule" id="PRU01266"/>
    </source>
</evidence>
<organism>
    <name type="scientific">Rickettsia typhi (strain ATCC VR-144 / Wilmington)</name>
    <dbReference type="NCBI Taxonomy" id="257363"/>
    <lineage>
        <taxon>Bacteria</taxon>
        <taxon>Pseudomonadati</taxon>
        <taxon>Pseudomonadota</taxon>
        <taxon>Alphaproteobacteria</taxon>
        <taxon>Rickettsiales</taxon>
        <taxon>Rickettsiaceae</taxon>
        <taxon>Rickettsieae</taxon>
        <taxon>Rickettsia</taxon>
        <taxon>typhus group</taxon>
    </lineage>
</organism>
<reference key="1">
    <citation type="journal article" date="2004" name="J. Bacteriol.">
        <title>Complete genome sequence of Rickettsia typhi and comparison with sequences of other Rickettsiae.</title>
        <authorList>
            <person name="McLeod M.P."/>
            <person name="Qin X."/>
            <person name="Karpathy S.E."/>
            <person name="Gioia J."/>
            <person name="Highlander S.K."/>
            <person name="Fox G.E."/>
            <person name="McNeill T.Z."/>
            <person name="Jiang H."/>
            <person name="Muzny D."/>
            <person name="Jacob L.S."/>
            <person name="Hawes A.C."/>
            <person name="Sodergren E."/>
            <person name="Gill R."/>
            <person name="Hume J."/>
            <person name="Morgan M."/>
            <person name="Fan G."/>
            <person name="Amin A.G."/>
            <person name="Gibbs R.A."/>
            <person name="Hong C."/>
            <person name="Yu X.-J."/>
            <person name="Walker D.H."/>
            <person name="Weinstock G.M."/>
        </authorList>
    </citation>
    <scope>NUCLEOTIDE SEQUENCE [LARGE SCALE GENOMIC DNA]</scope>
    <source>
        <strain>ATCC VR-144 / Wilmington</strain>
    </source>
</reference>